<accession>Q4KEZ9</accession>
<name>TRPF_PSEF5</name>
<reference key="1">
    <citation type="journal article" date="2005" name="Nat. Biotechnol.">
        <title>Complete genome sequence of the plant commensal Pseudomonas fluorescens Pf-5.</title>
        <authorList>
            <person name="Paulsen I.T."/>
            <person name="Press C.M."/>
            <person name="Ravel J."/>
            <person name="Kobayashi D.Y."/>
            <person name="Myers G.S.A."/>
            <person name="Mavrodi D.V."/>
            <person name="DeBoy R.T."/>
            <person name="Seshadri R."/>
            <person name="Ren Q."/>
            <person name="Madupu R."/>
            <person name="Dodson R.J."/>
            <person name="Durkin A.S."/>
            <person name="Brinkac L.M."/>
            <person name="Daugherty S.C."/>
            <person name="Sullivan S.A."/>
            <person name="Rosovitz M.J."/>
            <person name="Gwinn M.L."/>
            <person name="Zhou L."/>
            <person name="Schneider D.J."/>
            <person name="Cartinhour S.W."/>
            <person name="Nelson W.C."/>
            <person name="Weidman J."/>
            <person name="Watkins K."/>
            <person name="Tran K."/>
            <person name="Khouri H."/>
            <person name="Pierson E.A."/>
            <person name="Pierson L.S. III"/>
            <person name="Thomashow L.S."/>
            <person name="Loper J.E."/>
        </authorList>
    </citation>
    <scope>NUCLEOTIDE SEQUENCE [LARGE SCALE GENOMIC DNA]</scope>
    <source>
        <strain>ATCC BAA-477 / NRRL B-23932 / Pf-5</strain>
    </source>
</reference>
<proteinExistence type="inferred from homology"/>
<organism>
    <name type="scientific">Pseudomonas fluorescens (strain ATCC BAA-477 / NRRL B-23932 / Pf-5)</name>
    <dbReference type="NCBI Taxonomy" id="220664"/>
    <lineage>
        <taxon>Bacteria</taxon>
        <taxon>Pseudomonadati</taxon>
        <taxon>Pseudomonadota</taxon>
        <taxon>Gammaproteobacteria</taxon>
        <taxon>Pseudomonadales</taxon>
        <taxon>Pseudomonadaceae</taxon>
        <taxon>Pseudomonas</taxon>
    </lineage>
</organism>
<gene>
    <name evidence="1" type="primary">trpF</name>
    <name type="ordered locus">PFL_2072</name>
</gene>
<dbReference type="EC" id="5.3.1.24" evidence="1"/>
<dbReference type="EMBL" id="CP000076">
    <property type="protein sequence ID" value="AAY91351.1"/>
    <property type="molecule type" value="Genomic_DNA"/>
</dbReference>
<dbReference type="RefSeq" id="WP_011060383.1">
    <property type="nucleotide sequence ID" value="NC_004129.6"/>
</dbReference>
<dbReference type="SMR" id="Q4KEZ9"/>
<dbReference type="STRING" id="220664.PFL_2072"/>
<dbReference type="KEGG" id="pfl:PFL_2072"/>
<dbReference type="PATRIC" id="fig|220664.5.peg.2104"/>
<dbReference type="eggNOG" id="COG0135">
    <property type="taxonomic scope" value="Bacteria"/>
</dbReference>
<dbReference type="HOGENOM" id="CLU_076364_2_0_6"/>
<dbReference type="UniPathway" id="UPA00035">
    <property type="reaction ID" value="UER00042"/>
</dbReference>
<dbReference type="Proteomes" id="UP000008540">
    <property type="component" value="Chromosome"/>
</dbReference>
<dbReference type="GO" id="GO:0004640">
    <property type="term" value="F:phosphoribosylanthranilate isomerase activity"/>
    <property type="evidence" value="ECO:0007669"/>
    <property type="project" value="UniProtKB-UniRule"/>
</dbReference>
<dbReference type="GO" id="GO:0000162">
    <property type="term" value="P:L-tryptophan biosynthetic process"/>
    <property type="evidence" value="ECO:0007669"/>
    <property type="project" value="UniProtKB-UniRule"/>
</dbReference>
<dbReference type="CDD" id="cd00405">
    <property type="entry name" value="PRAI"/>
    <property type="match status" value="1"/>
</dbReference>
<dbReference type="FunFam" id="3.20.20.70:FF:000075">
    <property type="entry name" value="Tryptophan biosynthesis protein TRP1"/>
    <property type="match status" value="1"/>
</dbReference>
<dbReference type="Gene3D" id="3.20.20.70">
    <property type="entry name" value="Aldolase class I"/>
    <property type="match status" value="1"/>
</dbReference>
<dbReference type="HAMAP" id="MF_00135">
    <property type="entry name" value="PRAI"/>
    <property type="match status" value="1"/>
</dbReference>
<dbReference type="InterPro" id="IPR013785">
    <property type="entry name" value="Aldolase_TIM"/>
</dbReference>
<dbReference type="InterPro" id="IPR001240">
    <property type="entry name" value="PRAI_dom"/>
</dbReference>
<dbReference type="InterPro" id="IPR011060">
    <property type="entry name" value="RibuloseP-bd_barrel"/>
</dbReference>
<dbReference type="InterPro" id="IPR044643">
    <property type="entry name" value="TrpF_fam"/>
</dbReference>
<dbReference type="NCBIfam" id="NF002298">
    <property type="entry name" value="PRK01222.1-4"/>
    <property type="match status" value="1"/>
</dbReference>
<dbReference type="NCBIfam" id="NF002299">
    <property type="entry name" value="PRK01222.1-6"/>
    <property type="match status" value="1"/>
</dbReference>
<dbReference type="PANTHER" id="PTHR42894">
    <property type="entry name" value="N-(5'-PHOSPHORIBOSYL)ANTHRANILATE ISOMERASE"/>
    <property type="match status" value="1"/>
</dbReference>
<dbReference type="PANTHER" id="PTHR42894:SF1">
    <property type="entry name" value="N-(5'-PHOSPHORIBOSYL)ANTHRANILATE ISOMERASE"/>
    <property type="match status" value="1"/>
</dbReference>
<dbReference type="Pfam" id="PF00697">
    <property type="entry name" value="PRAI"/>
    <property type="match status" value="1"/>
</dbReference>
<dbReference type="SUPFAM" id="SSF51366">
    <property type="entry name" value="Ribulose-phoshate binding barrel"/>
    <property type="match status" value="1"/>
</dbReference>
<keyword id="KW-0028">Amino-acid biosynthesis</keyword>
<keyword id="KW-0057">Aromatic amino acid biosynthesis</keyword>
<keyword id="KW-0413">Isomerase</keyword>
<keyword id="KW-0822">Tryptophan biosynthesis</keyword>
<evidence type="ECO:0000255" key="1">
    <source>
        <dbReference type="HAMAP-Rule" id="MF_00135"/>
    </source>
</evidence>
<sequence length="210" mass="21917">MPAVRSKICGITRIEDALAAVAAGADAIGLVFYAKSPRAVNVQQARAIIAALPPFVTSVGLFVNASRCELGEILDAVPLDLLQFHGDESAADCEGYHRPYIKALRVKAGDDIAAACLAYPRASGILLDTYVEGVPGGTGEAFDWSLVPQGLSKPIILAGGLTPDNVAAAIARVRPYAVDVSGGVEQGKGIKDPAKIQAFMQAVRRSNESM</sequence>
<feature type="chain" id="PRO_1000018623" description="N-(5'-phosphoribosyl)anthranilate isomerase">
    <location>
        <begin position="1"/>
        <end position="210"/>
    </location>
</feature>
<comment type="catalytic activity">
    <reaction evidence="1">
        <text>N-(5-phospho-beta-D-ribosyl)anthranilate = 1-(2-carboxyphenylamino)-1-deoxy-D-ribulose 5-phosphate</text>
        <dbReference type="Rhea" id="RHEA:21540"/>
        <dbReference type="ChEBI" id="CHEBI:18277"/>
        <dbReference type="ChEBI" id="CHEBI:58613"/>
        <dbReference type="EC" id="5.3.1.24"/>
    </reaction>
</comment>
<comment type="pathway">
    <text evidence="1">Amino-acid biosynthesis; L-tryptophan biosynthesis; L-tryptophan from chorismate: step 3/5.</text>
</comment>
<comment type="similarity">
    <text evidence="1">Belongs to the TrpF family.</text>
</comment>
<protein>
    <recommendedName>
        <fullName evidence="1">N-(5'-phosphoribosyl)anthranilate isomerase</fullName>
        <shortName evidence="1">PRAI</shortName>
        <ecNumber evidence="1">5.3.1.24</ecNumber>
    </recommendedName>
</protein>